<feature type="chain" id="PRO_1000184331" description="ATP synthase subunit c">
    <location>
        <begin position="1"/>
        <end position="70"/>
    </location>
</feature>
<feature type="transmembrane region" description="Helical" evidence="1">
    <location>
        <begin position="5"/>
        <end position="25"/>
    </location>
</feature>
<feature type="transmembrane region" description="Helical" evidence="1">
    <location>
        <begin position="47"/>
        <end position="67"/>
    </location>
</feature>
<feature type="site" description="Reversibly protonated during proton transport" evidence="1">
    <location>
        <position position="54"/>
    </location>
</feature>
<evidence type="ECO:0000255" key="1">
    <source>
        <dbReference type="HAMAP-Rule" id="MF_01396"/>
    </source>
</evidence>
<comment type="function">
    <text evidence="1">F(1)F(0) ATP synthase produces ATP from ADP in the presence of a proton or sodium gradient. F-type ATPases consist of two structural domains, F(1) containing the extramembraneous catalytic core and F(0) containing the membrane proton channel, linked together by a central stalk and a peripheral stalk. During catalysis, ATP synthesis in the catalytic domain of F(1) is coupled via a rotary mechanism of the central stalk subunits to proton translocation.</text>
</comment>
<comment type="function">
    <text evidence="1">Key component of the F(0) channel; it plays a direct role in translocation across the membrane. A homomeric c-ring of between 10-14 subunits forms the central stalk rotor element with the F(1) delta and epsilon subunits.</text>
</comment>
<comment type="subunit">
    <text evidence="1">F-type ATPases have 2 components, F(1) - the catalytic core - and F(0) - the membrane proton channel. F(1) has five subunits: alpha(3), beta(3), gamma(1), delta(1), epsilon(1). F(0) has three main subunits: a(1), b(2) and c(10-14). The alpha and beta chains form an alternating ring which encloses part of the gamma chain. F(1) is attached to F(0) by a central stalk formed by the gamma and epsilon chains, while a peripheral stalk is formed by the delta and b chains.</text>
</comment>
<comment type="subcellular location">
    <subcellularLocation>
        <location evidence="1">Cell membrane</location>
        <topology evidence="1">Multi-pass membrane protein</topology>
    </subcellularLocation>
</comment>
<comment type="similarity">
    <text evidence="1">Belongs to the ATPase C chain family.</text>
</comment>
<gene>
    <name evidence="1" type="primary">atpE</name>
    <name type="ordered locus">BH3759</name>
</gene>
<sequence>MNLLAAGIAAGLAAVGGAIAVAIIVKATLEGVTRQPELRGSLQTLMFIGVPLAEAVPIIAIVVSFILLFT</sequence>
<protein>
    <recommendedName>
        <fullName evidence="1">ATP synthase subunit c</fullName>
    </recommendedName>
    <alternativeName>
        <fullName evidence="1">ATP synthase F(0) sector subunit c</fullName>
    </alternativeName>
    <alternativeName>
        <fullName evidence="1">F-type ATPase subunit c</fullName>
        <shortName evidence="1">F-ATPase subunit c</shortName>
    </alternativeName>
    <alternativeName>
        <fullName evidence="1">Lipid-binding protein</fullName>
    </alternativeName>
</protein>
<accession>Q9K6H0</accession>
<proteinExistence type="inferred from homology"/>
<reference key="1">
    <citation type="journal article" date="2000" name="Nucleic Acids Res.">
        <title>Complete genome sequence of the alkaliphilic bacterium Bacillus halodurans and genomic sequence comparison with Bacillus subtilis.</title>
        <authorList>
            <person name="Takami H."/>
            <person name="Nakasone K."/>
            <person name="Takaki Y."/>
            <person name="Maeno G."/>
            <person name="Sasaki R."/>
            <person name="Masui N."/>
            <person name="Fuji F."/>
            <person name="Hirama C."/>
            <person name="Nakamura Y."/>
            <person name="Ogasawara N."/>
            <person name="Kuhara S."/>
            <person name="Horikoshi K."/>
        </authorList>
    </citation>
    <scope>NUCLEOTIDE SEQUENCE [LARGE SCALE GENOMIC DNA]</scope>
    <source>
        <strain>ATCC BAA-125 / DSM 18197 / FERM 7344 / JCM 9153 / C-125</strain>
    </source>
</reference>
<name>ATPL_HALH5</name>
<keyword id="KW-0066">ATP synthesis</keyword>
<keyword id="KW-1003">Cell membrane</keyword>
<keyword id="KW-0138">CF(0)</keyword>
<keyword id="KW-0375">Hydrogen ion transport</keyword>
<keyword id="KW-0406">Ion transport</keyword>
<keyword id="KW-0446">Lipid-binding</keyword>
<keyword id="KW-0472">Membrane</keyword>
<keyword id="KW-1185">Reference proteome</keyword>
<keyword id="KW-0812">Transmembrane</keyword>
<keyword id="KW-1133">Transmembrane helix</keyword>
<keyword id="KW-0813">Transport</keyword>
<organism>
    <name type="scientific">Halalkalibacterium halodurans (strain ATCC BAA-125 / DSM 18197 / FERM 7344 / JCM 9153 / C-125)</name>
    <name type="common">Bacillus halodurans</name>
    <dbReference type="NCBI Taxonomy" id="272558"/>
    <lineage>
        <taxon>Bacteria</taxon>
        <taxon>Bacillati</taxon>
        <taxon>Bacillota</taxon>
        <taxon>Bacilli</taxon>
        <taxon>Bacillales</taxon>
        <taxon>Bacillaceae</taxon>
        <taxon>Halalkalibacterium (ex Joshi et al. 2022)</taxon>
    </lineage>
</organism>
<dbReference type="EMBL" id="BA000004">
    <property type="protein sequence ID" value="BAB07478.1"/>
    <property type="molecule type" value="Genomic_DNA"/>
</dbReference>
<dbReference type="PIR" id="G84119">
    <property type="entry name" value="G84119"/>
</dbReference>
<dbReference type="RefSeq" id="WP_010899884.1">
    <property type="nucleotide sequence ID" value="NC_002570.2"/>
</dbReference>
<dbReference type="SMR" id="Q9K6H0"/>
<dbReference type="STRING" id="272558.gene:10729672"/>
<dbReference type="KEGG" id="bha:BH3759"/>
<dbReference type="eggNOG" id="COG0636">
    <property type="taxonomic scope" value="Bacteria"/>
</dbReference>
<dbReference type="HOGENOM" id="CLU_148047_1_1_9"/>
<dbReference type="OrthoDB" id="2357540at2"/>
<dbReference type="Proteomes" id="UP000001258">
    <property type="component" value="Chromosome"/>
</dbReference>
<dbReference type="GO" id="GO:0005886">
    <property type="term" value="C:plasma membrane"/>
    <property type="evidence" value="ECO:0007669"/>
    <property type="project" value="UniProtKB-SubCell"/>
</dbReference>
<dbReference type="GO" id="GO:0045259">
    <property type="term" value="C:proton-transporting ATP synthase complex"/>
    <property type="evidence" value="ECO:0007669"/>
    <property type="project" value="UniProtKB-KW"/>
</dbReference>
<dbReference type="GO" id="GO:0033177">
    <property type="term" value="C:proton-transporting two-sector ATPase complex, proton-transporting domain"/>
    <property type="evidence" value="ECO:0007669"/>
    <property type="project" value="InterPro"/>
</dbReference>
<dbReference type="GO" id="GO:0008289">
    <property type="term" value="F:lipid binding"/>
    <property type="evidence" value="ECO:0007669"/>
    <property type="project" value="UniProtKB-KW"/>
</dbReference>
<dbReference type="GO" id="GO:0046933">
    <property type="term" value="F:proton-transporting ATP synthase activity, rotational mechanism"/>
    <property type="evidence" value="ECO:0007669"/>
    <property type="project" value="UniProtKB-UniRule"/>
</dbReference>
<dbReference type="CDD" id="cd18185">
    <property type="entry name" value="ATP-synt_Fo_c_ATPE"/>
    <property type="match status" value="1"/>
</dbReference>
<dbReference type="FunFam" id="1.20.20.10:FF:000002">
    <property type="entry name" value="ATP synthase subunit c"/>
    <property type="match status" value="1"/>
</dbReference>
<dbReference type="Gene3D" id="1.20.20.10">
    <property type="entry name" value="F1F0 ATP synthase subunit C"/>
    <property type="match status" value="1"/>
</dbReference>
<dbReference type="HAMAP" id="MF_01396">
    <property type="entry name" value="ATP_synth_c_bact"/>
    <property type="match status" value="1"/>
</dbReference>
<dbReference type="InterPro" id="IPR005953">
    <property type="entry name" value="ATP_synth_csu_bac/chlpt"/>
</dbReference>
<dbReference type="InterPro" id="IPR000454">
    <property type="entry name" value="ATP_synth_F0_csu"/>
</dbReference>
<dbReference type="InterPro" id="IPR020537">
    <property type="entry name" value="ATP_synth_F0_csu_DDCD_BS"/>
</dbReference>
<dbReference type="InterPro" id="IPR038662">
    <property type="entry name" value="ATP_synth_F0_csu_sf"/>
</dbReference>
<dbReference type="InterPro" id="IPR002379">
    <property type="entry name" value="ATPase_proteolipid_c-like_dom"/>
</dbReference>
<dbReference type="InterPro" id="IPR035921">
    <property type="entry name" value="F/V-ATP_Csub_sf"/>
</dbReference>
<dbReference type="NCBIfam" id="TIGR01260">
    <property type="entry name" value="ATP_synt_c"/>
    <property type="match status" value="1"/>
</dbReference>
<dbReference type="NCBIfam" id="NF005363">
    <property type="entry name" value="PRK06876.1"/>
    <property type="match status" value="1"/>
</dbReference>
<dbReference type="Pfam" id="PF00137">
    <property type="entry name" value="ATP-synt_C"/>
    <property type="match status" value="1"/>
</dbReference>
<dbReference type="PRINTS" id="PR00124">
    <property type="entry name" value="ATPASEC"/>
</dbReference>
<dbReference type="SUPFAM" id="SSF81333">
    <property type="entry name" value="F1F0 ATP synthase subunit C"/>
    <property type="match status" value="1"/>
</dbReference>
<dbReference type="PROSITE" id="PS00605">
    <property type="entry name" value="ATPASE_C"/>
    <property type="match status" value="1"/>
</dbReference>